<gene>
    <name evidence="1" type="primary">pstB</name>
    <name type="ordered locus">PF1008</name>
</gene>
<accession>Q8U242</accession>
<organism>
    <name type="scientific">Pyrococcus furiosus (strain ATCC 43587 / DSM 3638 / JCM 8422 / Vc1)</name>
    <dbReference type="NCBI Taxonomy" id="186497"/>
    <lineage>
        <taxon>Archaea</taxon>
        <taxon>Methanobacteriati</taxon>
        <taxon>Methanobacteriota</taxon>
        <taxon>Thermococci</taxon>
        <taxon>Thermococcales</taxon>
        <taxon>Thermococcaceae</taxon>
        <taxon>Pyrococcus</taxon>
    </lineage>
</organism>
<keyword id="KW-0067">ATP-binding</keyword>
<keyword id="KW-1003">Cell membrane</keyword>
<keyword id="KW-0472">Membrane</keyword>
<keyword id="KW-0547">Nucleotide-binding</keyword>
<keyword id="KW-0592">Phosphate transport</keyword>
<keyword id="KW-1185">Reference proteome</keyword>
<keyword id="KW-1278">Translocase</keyword>
<keyword id="KW-0813">Transport</keyword>
<reference key="1">
    <citation type="journal article" date="1999" name="Genetics">
        <title>Divergence of the hyperthermophilic archaea Pyrococcus furiosus and P. horikoshii inferred from complete genomic sequences.</title>
        <authorList>
            <person name="Maeder D.L."/>
            <person name="Weiss R.B."/>
            <person name="Dunn D.M."/>
            <person name="Cherry J.L."/>
            <person name="Gonzalez J.M."/>
            <person name="DiRuggiero J."/>
            <person name="Robb F.T."/>
        </authorList>
    </citation>
    <scope>NUCLEOTIDE SEQUENCE [LARGE SCALE GENOMIC DNA]</scope>
    <source>
        <strain>ATCC 43587 / DSM 3638 / JCM 8422 / Vc1</strain>
    </source>
</reference>
<proteinExistence type="inferred from homology"/>
<protein>
    <recommendedName>
        <fullName evidence="1">Phosphate import ATP-binding protein PstB</fullName>
        <ecNumber evidence="1">7.3.2.1</ecNumber>
    </recommendedName>
    <alternativeName>
        <fullName evidence="1">ABC phosphate transporter</fullName>
    </alternativeName>
    <alternativeName>
        <fullName evidence="1">Phosphate-transporting ATPase</fullName>
    </alternativeName>
</protein>
<sequence>MKFAIETINLHVYYGRNHVLRGINLQIPQRGIFAIMGPSGCGKSTLLRTFNRLIELNQDARVEGEVRIFGKNIYSEDVDPIEVRKKVGMVFQYPNPFPHLTIYENVAIGVKLNKLVKSQKELDERVRWALKKAALWEEVKDRLNDYPGNLSGGQRQRLVIARVLAMKPDILLMDEPTANIDPVGTAKIEELLLELKTDYTIVLVTHSPAQAARIADYVAFLYLGKLIEVGPTRKVFENPEHELTEKYVTGALG</sequence>
<feature type="chain" id="PRO_0000092952" description="Phosphate import ATP-binding protein PstB">
    <location>
        <begin position="1"/>
        <end position="253"/>
    </location>
</feature>
<feature type="domain" description="ABC transporter" evidence="1">
    <location>
        <begin position="5"/>
        <end position="248"/>
    </location>
</feature>
<feature type="binding site" evidence="1">
    <location>
        <begin position="37"/>
        <end position="44"/>
    </location>
    <ligand>
        <name>ATP</name>
        <dbReference type="ChEBI" id="CHEBI:30616"/>
    </ligand>
</feature>
<name>PSTB_PYRFU</name>
<evidence type="ECO:0000255" key="1">
    <source>
        <dbReference type="HAMAP-Rule" id="MF_01702"/>
    </source>
</evidence>
<comment type="function">
    <text evidence="1">Part of the ABC transporter complex PstSACB involved in phosphate import. Responsible for energy coupling to the transport system.</text>
</comment>
<comment type="catalytic activity">
    <reaction evidence="1">
        <text>phosphate(out) + ATP + H2O = ADP + 2 phosphate(in) + H(+)</text>
        <dbReference type="Rhea" id="RHEA:24440"/>
        <dbReference type="ChEBI" id="CHEBI:15377"/>
        <dbReference type="ChEBI" id="CHEBI:15378"/>
        <dbReference type="ChEBI" id="CHEBI:30616"/>
        <dbReference type="ChEBI" id="CHEBI:43474"/>
        <dbReference type="ChEBI" id="CHEBI:456216"/>
        <dbReference type="EC" id="7.3.2.1"/>
    </reaction>
</comment>
<comment type="subunit">
    <text evidence="1">The complex is composed of two ATP-binding proteins (PstB), two transmembrane proteins (PstC and PstA) and a solute-binding protein (PstS).</text>
</comment>
<comment type="subcellular location">
    <subcellularLocation>
        <location evidence="1">Cell membrane</location>
        <topology evidence="1">Peripheral membrane protein</topology>
    </subcellularLocation>
</comment>
<comment type="similarity">
    <text evidence="1">Belongs to the ABC transporter superfamily. Phosphate importer (TC 3.A.1.7) family.</text>
</comment>
<dbReference type="EC" id="7.3.2.1" evidence="1"/>
<dbReference type="EMBL" id="AE009950">
    <property type="protein sequence ID" value="AAL81132.1"/>
    <property type="molecule type" value="Genomic_DNA"/>
</dbReference>
<dbReference type="RefSeq" id="WP_011012145.1">
    <property type="nucleotide sequence ID" value="NZ_CP023154.1"/>
</dbReference>
<dbReference type="SMR" id="Q8U242"/>
<dbReference type="STRING" id="186497.PF1008"/>
<dbReference type="PaxDb" id="186497-PF1008"/>
<dbReference type="KEGG" id="pfu:PF1008"/>
<dbReference type="PATRIC" id="fig|186497.12.peg.1067"/>
<dbReference type="eggNOG" id="arCOG00231">
    <property type="taxonomic scope" value="Archaea"/>
</dbReference>
<dbReference type="HOGENOM" id="CLU_000604_1_22_2"/>
<dbReference type="OrthoDB" id="31298at2157"/>
<dbReference type="PhylomeDB" id="Q8U242"/>
<dbReference type="Proteomes" id="UP000001013">
    <property type="component" value="Chromosome"/>
</dbReference>
<dbReference type="GO" id="GO:0005886">
    <property type="term" value="C:plasma membrane"/>
    <property type="evidence" value="ECO:0007669"/>
    <property type="project" value="UniProtKB-SubCell"/>
</dbReference>
<dbReference type="GO" id="GO:0005524">
    <property type="term" value="F:ATP binding"/>
    <property type="evidence" value="ECO:0007669"/>
    <property type="project" value="UniProtKB-KW"/>
</dbReference>
<dbReference type="GO" id="GO:0016887">
    <property type="term" value="F:ATP hydrolysis activity"/>
    <property type="evidence" value="ECO:0007669"/>
    <property type="project" value="InterPro"/>
</dbReference>
<dbReference type="GO" id="GO:0015415">
    <property type="term" value="F:ATPase-coupled phosphate ion transmembrane transporter activity"/>
    <property type="evidence" value="ECO:0007669"/>
    <property type="project" value="UniProtKB-EC"/>
</dbReference>
<dbReference type="GO" id="GO:0035435">
    <property type="term" value="P:phosphate ion transmembrane transport"/>
    <property type="evidence" value="ECO:0007669"/>
    <property type="project" value="InterPro"/>
</dbReference>
<dbReference type="CDD" id="cd03260">
    <property type="entry name" value="ABC_PstB_phosphate_transporter"/>
    <property type="match status" value="1"/>
</dbReference>
<dbReference type="Gene3D" id="3.40.50.300">
    <property type="entry name" value="P-loop containing nucleotide triphosphate hydrolases"/>
    <property type="match status" value="1"/>
</dbReference>
<dbReference type="InterPro" id="IPR003593">
    <property type="entry name" value="AAA+_ATPase"/>
</dbReference>
<dbReference type="InterPro" id="IPR003439">
    <property type="entry name" value="ABC_transporter-like_ATP-bd"/>
</dbReference>
<dbReference type="InterPro" id="IPR017871">
    <property type="entry name" value="ABC_transporter-like_CS"/>
</dbReference>
<dbReference type="InterPro" id="IPR027417">
    <property type="entry name" value="P-loop_NTPase"/>
</dbReference>
<dbReference type="InterPro" id="IPR005670">
    <property type="entry name" value="PstB-like"/>
</dbReference>
<dbReference type="NCBIfam" id="TIGR00972">
    <property type="entry name" value="3a0107s01c2"/>
    <property type="match status" value="1"/>
</dbReference>
<dbReference type="NCBIfam" id="NF010860">
    <property type="entry name" value="PRK14267.1"/>
    <property type="match status" value="1"/>
</dbReference>
<dbReference type="PANTHER" id="PTHR43423">
    <property type="entry name" value="ABC TRANSPORTER I FAMILY MEMBER 17"/>
    <property type="match status" value="1"/>
</dbReference>
<dbReference type="PANTHER" id="PTHR43423:SF1">
    <property type="entry name" value="ABC TRANSPORTER I FAMILY MEMBER 17"/>
    <property type="match status" value="1"/>
</dbReference>
<dbReference type="Pfam" id="PF00005">
    <property type="entry name" value="ABC_tran"/>
    <property type="match status" value="1"/>
</dbReference>
<dbReference type="SMART" id="SM00382">
    <property type="entry name" value="AAA"/>
    <property type="match status" value="1"/>
</dbReference>
<dbReference type="SUPFAM" id="SSF52540">
    <property type="entry name" value="P-loop containing nucleoside triphosphate hydrolases"/>
    <property type="match status" value="1"/>
</dbReference>
<dbReference type="PROSITE" id="PS00211">
    <property type="entry name" value="ABC_TRANSPORTER_1"/>
    <property type="match status" value="1"/>
</dbReference>
<dbReference type="PROSITE" id="PS50893">
    <property type="entry name" value="ABC_TRANSPORTER_2"/>
    <property type="match status" value="1"/>
</dbReference>
<dbReference type="PROSITE" id="PS51238">
    <property type="entry name" value="PSTB"/>
    <property type="match status" value="1"/>
</dbReference>